<keyword id="KW-0533">Nickel</keyword>
<keyword id="KW-1185">Reference proteome</keyword>
<evidence type="ECO:0000256" key="1">
    <source>
        <dbReference type="SAM" id="MobiDB-lite"/>
    </source>
</evidence>
<evidence type="ECO:0000305" key="2"/>
<protein>
    <recommendedName>
        <fullName>Hydrogenase-1 operon protein HyaF</fullName>
    </recommendedName>
</protein>
<gene>
    <name type="primary">hyaF</name>
    <name type="ordered locus">b0977</name>
    <name type="ordered locus">JW0959</name>
</gene>
<dbReference type="EMBL" id="M34825">
    <property type="protein sequence ID" value="AAA24002.1"/>
    <property type="molecule type" value="Genomic_DNA"/>
</dbReference>
<dbReference type="EMBL" id="U00096">
    <property type="protein sequence ID" value="AAC74062.1"/>
    <property type="molecule type" value="Genomic_DNA"/>
</dbReference>
<dbReference type="EMBL" id="AP009048">
    <property type="protein sequence ID" value="BAA35742.1"/>
    <property type="molecule type" value="Genomic_DNA"/>
</dbReference>
<dbReference type="PIR" id="JV0077">
    <property type="entry name" value="QQECHF"/>
</dbReference>
<dbReference type="RefSeq" id="NP_415496.1">
    <property type="nucleotide sequence ID" value="NC_000913.3"/>
</dbReference>
<dbReference type="RefSeq" id="WP_000004899.1">
    <property type="nucleotide sequence ID" value="NZ_STEB01000006.1"/>
</dbReference>
<dbReference type="SMR" id="P19932"/>
<dbReference type="BioGRID" id="4260047">
    <property type="interactions" value="28"/>
</dbReference>
<dbReference type="BioGRID" id="849946">
    <property type="interactions" value="2"/>
</dbReference>
<dbReference type="FunCoup" id="P19932">
    <property type="interactions" value="64"/>
</dbReference>
<dbReference type="IntAct" id="P19932">
    <property type="interactions" value="9"/>
</dbReference>
<dbReference type="STRING" id="511145.b0977"/>
<dbReference type="jPOST" id="P19932"/>
<dbReference type="PaxDb" id="511145-b0977"/>
<dbReference type="EnsemblBacteria" id="AAC74062">
    <property type="protein sequence ID" value="AAC74062"/>
    <property type="gene ID" value="b0977"/>
</dbReference>
<dbReference type="GeneID" id="945572"/>
<dbReference type="KEGG" id="ecj:JW0959"/>
<dbReference type="KEGG" id="eco:b0977"/>
<dbReference type="KEGG" id="ecoc:C3026_05960"/>
<dbReference type="PATRIC" id="fig|1411691.4.peg.1297"/>
<dbReference type="EchoBASE" id="EB0468"/>
<dbReference type="eggNOG" id="COG1773">
    <property type="taxonomic scope" value="Bacteria"/>
</dbReference>
<dbReference type="HOGENOM" id="CLU_079566_0_0_6"/>
<dbReference type="InParanoid" id="P19932"/>
<dbReference type="OMA" id="NFTLLPM"/>
<dbReference type="OrthoDB" id="6560677at2"/>
<dbReference type="PhylomeDB" id="P19932"/>
<dbReference type="BioCyc" id="EcoCyc:EG10473-MONOMER"/>
<dbReference type="PRO" id="PR:P19932"/>
<dbReference type="Proteomes" id="UP000000625">
    <property type="component" value="Chromosome"/>
</dbReference>
<dbReference type="Gene3D" id="3.30.1370.140">
    <property type="entry name" value="HupH hydrogenase expression protein, C-terminal domain"/>
    <property type="match status" value="2"/>
</dbReference>
<dbReference type="InterPro" id="IPR038527">
    <property type="entry name" value="HupH_C_sf"/>
</dbReference>
<dbReference type="InterPro" id="IPR006894">
    <property type="entry name" value="HupH_Hydgase_express_prot_C"/>
</dbReference>
<dbReference type="Pfam" id="PF04809">
    <property type="entry name" value="HupH_C"/>
    <property type="match status" value="2"/>
</dbReference>
<feature type="chain" id="PRO_0000201421" description="Hydrogenase-1 operon protein HyaF">
    <location>
        <begin position="1"/>
        <end position="285"/>
    </location>
</feature>
<feature type="region of interest" description="Disordered" evidence="1">
    <location>
        <begin position="1"/>
        <end position="21"/>
    </location>
</feature>
<name>HYAF_ECOLI</name>
<accession>P19932</accession>
<comment type="function">
    <text>Not known. Could enhance the incorporation of nickel to the hydrogenase.</text>
</comment>
<comment type="similarity">
    <text evidence="2">Belongs to the HupH/HyaF family.</text>
</comment>
<proteinExistence type="inferred from homology"/>
<organism>
    <name type="scientific">Escherichia coli (strain K12)</name>
    <dbReference type="NCBI Taxonomy" id="83333"/>
    <lineage>
        <taxon>Bacteria</taxon>
        <taxon>Pseudomonadati</taxon>
        <taxon>Pseudomonadota</taxon>
        <taxon>Gammaproteobacteria</taxon>
        <taxon>Enterobacterales</taxon>
        <taxon>Enterobacteriaceae</taxon>
        <taxon>Escherichia</taxon>
    </lineage>
</organism>
<sequence length="285" mass="31431">MSETFFHLLGPGTQPNDDSFSMNPLPITCQVNDEPSMAALEQCAHSPQVIALLNELQHQLSERQPPLGEVLAVDLLNLNADDRHFINTLLGEGEVSVRIQQADDSESEIQEAIFCGLWRVRRRRGEKLLEDKLEAGCAPLALWQAATQNLLPTDSLLPPPIDGLMNGLPLAHELLAHVRNPDAQPHSINLTQLPISEADRLFLSRLCGPGNIQIRTIGYGESYINATGLRHVWHLRCTDTLKGPLLESYEICPIPEVVLAAPEDLVDSAQRLSEVCQWLAEAAPT</sequence>
<reference key="1">
    <citation type="journal article" date="1990" name="J. Bacteriol.">
        <title>Cloning and sequencing of a putative Escherichia coli [NiFe] hydrogenase-1 operon containing six open reading frames.</title>
        <authorList>
            <person name="Menon N.K."/>
            <person name="Robbins J."/>
            <person name="Peck H.D. Jr."/>
            <person name="Chatelus C.Y."/>
            <person name="Choi E.-S."/>
            <person name="Przybyla A.E."/>
        </authorList>
    </citation>
    <scope>NUCLEOTIDE SEQUENCE [GENOMIC DNA]</scope>
</reference>
<reference key="2">
    <citation type="journal article" date="1996" name="DNA Res.">
        <title>A 718-kb DNA sequence of the Escherichia coli K-12 genome corresponding to the 12.7-28.0 min region on the linkage map.</title>
        <authorList>
            <person name="Oshima T."/>
            <person name="Aiba H."/>
            <person name="Baba T."/>
            <person name="Fujita K."/>
            <person name="Hayashi K."/>
            <person name="Honjo A."/>
            <person name="Ikemoto K."/>
            <person name="Inada T."/>
            <person name="Itoh T."/>
            <person name="Kajihara M."/>
            <person name="Kanai K."/>
            <person name="Kashimoto K."/>
            <person name="Kimura S."/>
            <person name="Kitagawa M."/>
            <person name="Makino K."/>
            <person name="Masuda S."/>
            <person name="Miki T."/>
            <person name="Mizobuchi K."/>
            <person name="Mori H."/>
            <person name="Motomura K."/>
            <person name="Nakamura Y."/>
            <person name="Nashimoto H."/>
            <person name="Nishio Y."/>
            <person name="Saito N."/>
            <person name="Sampei G."/>
            <person name="Seki Y."/>
            <person name="Tagami H."/>
            <person name="Takemoto K."/>
            <person name="Wada C."/>
            <person name="Yamamoto Y."/>
            <person name="Yano M."/>
            <person name="Horiuchi T."/>
        </authorList>
    </citation>
    <scope>NUCLEOTIDE SEQUENCE [LARGE SCALE GENOMIC DNA]</scope>
    <source>
        <strain>K12 / W3110 / ATCC 27325 / DSM 5911</strain>
    </source>
</reference>
<reference key="3">
    <citation type="journal article" date="1997" name="Science">
        <title>The complete genome sequence of Escherichia coli K-12.</title>
        <authorList>
            <person name="Blattner F.R."/>
            <person name="Plunkett G. III"/>
            <person name="Bloch C.A."/>
            <person name="Perna N.T."/>
            <person name="Burland V."/>
            <person name="Riley M."/>
            <person name="Collado-Vides J."/>
            <person name="Glasner J.D."/>
            <person name="Rode C.K."/>
            <person name="Mayhew G.F."/>
            <person name="Gregor J."/>
            <person name="Davis N.W."/>
            <person name="Kirkpatrick H.A."/>
            <person name="Goeden M.A."/>
            <person name="Rose D.J."/>
            <person name="Mau B."/>
            <person name="Shao Y."/>
        </authorList>
    </citation>
    <scope>NUCLEOTIDE SEQUENCE [LARGE SCALE GENOMIC DNA]</scope>
    <source>
        <strain>K12 / MG1655 / ATCC 47076</strain>
    </source>
</reference>
<reference key="4">
    <citation type="journal article" date="2006" name="Mol. Syst. Biol.">
        <title>Highly accurate genome sequences of Escherichia coli K-12 strains MG1655 and W3110.</title>
        <authorList>
            <person name="Hayashi K."/>
            <person name="Morooka N."/>
            <person name="Yamamoto Y."/>
            <person name="Fujita K."/>
            <person name="Isono K."/>
            <person name="Choi S."/>
            <person name="Ohtsubo E."/>
            <person name="Baba T."/>
            <person name="Wanner B.L."/>
            <person name="Mori H."/>
            <person name="Horiuchi T."/>
        </authorList>
    </citation>
    <scope>NUCLEOTIDE SEQUENCE [LARGE SCALE GENOMIC DNA]</scope>
    <source>
        <strain>K12 / W3110 / ATCC 27325 / DSM 5911</strain>
    </source>
</reference>